<evidence type="ECO:0000250" key="1">
    <source>
        <dbReference type="UniProtKB" id="Q96A25"/>
    </source>
</evidence>
<evidence type="ECO:0000255" key="2"/>
<evidence type="ECO:0000256" key="3">
    <source>
        <dbReference type="SAM" id="MobiDB-lite"/>
    </source>
</evidence>
<evidence type="ECO:0000269" key="4">
    <source>
    </source>
</evidence>
<evidence type="ECO:0000305" key="5"/>
<keyword id="KW-1003">Cell membrane</keyword>
<keyword id="KW-0391">Immunity</keyword>
<keyword id="KW-0399">Innate immunity</keyword>
<keyword id="KW-0472">Membrane</keyword>
<keyword id="KW-1185">Reference proteome</keyword>
<keyword id="KW-0812">Transmembrane</keyword>
<keyword id="KW-1133">Transmembrane helix</keyword>
<accession>Q8VC04</accession>
<accession>Q3U4J0</accession>
<accession>Q3U9D3</accession>
<accession>Q3UEA5</accession>
<accession>Q8CIC3</accession>
<sequence length="261" mass="29109">MGKAVSQLTSRKDEDKPILPDNPAMASQAANYFSTGSSKPAHSCMPYEKAASSSFVTCPTCQGNGEIPQEQEKQLVALIPYGDQRLKPRRTKLFVFLSVAICLLIFSLTIFFLYPRPIAVRPVGLNSSTVTFEDAHVQLNTTNVLNIFNSNFYPITVTQLTAEVLHQASVVGQVTSSLRLHIGPLASEQMPYEVASRILDENTYKICTWPKIRVHHILLNIQGSLTCSFLSHPQQLPFESFEYVDCRENMSLPHLELPRPA</sequence>
<gene>
    <name type="primary">Tmem106a</name>
</gene>
<name>T106A_MOUSE</name>
<dbReference type="EMBL" id="AK146019">
    <property type="protein sequence ID" value="BAE26837.1"/>
    <property type="molecule type" value="mRNA"/>
</dbReference>
<dbReference type="EMBL" id="AK149650">
    <property type="protein sequence ID" value="BAE29006.1"/>
    <property type="status" value="ALT_FRAME"/>
    <property type="molecule type" value="mRNA"/>
</dbReference>
<dbReference type="EMBL" id="AK150285">
    <property type="protein sequence ID" value="BAE29440.1"/>
    <property type="molecule type" value="mRNA"/>
</dbReference>
<dbReference type="EMBL" id="AK151842">
    <property type="protein sequence ID" value="BAE30734.1"/>
    <property type="status" value="ALT_FRAME"/>
    <property type="molecule type" value="mRNA"/>
</dbReference>
<dbReference type="EMBL" id="AK152741">
    <property type="protein sequence ID" value="BAE31461.1"/>
    <property type="molecule type" value="mRNA"/>
</dbReference>
<dbReference type="EMBL" id="AK154217">
    <property type="protein sequence ID" value="BAE32441.1"/>
    <property type="molecule type" value="mRNA"/>
</dbReference>
<dbReference type="EMBL" id="AK169081">
    <property type="protein sequence ID" value="BAE40865.1"/>
    <property type="molecule type" value="mRNA"/>
</dbReference>
<dbReference type="EMBL" id="AK170900">
    <property type="protein sequence ID" value="BAE42103.1"/>
    <property type="molecule type" value="mRNA"/>
</dbReference>
<dbReference type="EMBL" id="AK172282">
    <property type="protein sequence ID" value="BAE42923.1"/>
    <property type="molecule type" value="mRNA"/>
</dbReference>
<dbReference type="EMBL" id="BC022145">
    <property type="protein sequence ID" value="AAH22145.1"/>
    <property type="molecule type" value="mRNA"/>
</dbReference>
<dbReference type="EMBL" id="BC033268">
    <property type="protein sequence ID" value="AAH33268.1"/>
    <property type="molecule type" value="mRNA"/>
</dbReference>
<dbReference type="CCDS" id="CCDS25476.1"/>
<dbReference type="RefSeq" id="NP_001346254.1">
    <property type="nucleotide sequence ID" value="NM_001359325.1"/>
</dbReference>
<dbReference type="RefSeq" id="NP_001346255.1">
    <property type="nucleotide sequence ID" value="NM_001359326.1"/>
</dbReference>
<dbReference type="RefSeq" id="NP_001346256.1">
    <property type="nucleotide sequence ID" value="NM_001359327.1"/>
</dbReference>
<dbReference type="RefSeq" id="NP_659079.1">
    <property type="nucleotide sequence ID" value="NM_144830.3"/>
</dbReference>
<dbReference type="RefSeq" id="XP_006533101.1">
    <property type="nucleotide sequence ID" value="XM_006533038.3"/>
</dbReference>
<dbReference type="RefSeq" id="XP_017169971.1">
    <property type="nucleotide sequence ID" value="XM_017314482.1"/>
</dbReference>
<dbReference type="FunCoup" id="Q8VC04">
    <property type="interactions" value="511"/>
</dbReference>
<dbReference type="STRING" id="10090.ENSMUSP00000097971"/>
<dbReference type="GlyGen" id="Q8VC04">
    <property type="glycosylation" value="1 site, 1 N-linked glycan (1 site)"/>
</dbReference>
<dbReference type="iPTMnet" id="Q8VC04"/>
<dbReference type="PhosphoSitePlus" id="Q8VC04"/>
<dbReference type="PaxDb" id="10090-ENSMUSP00000045832"/>
<dbReference type="PeptideAtlas" id="Q8VC04"/>
<dbReference type="ProteomicsDB" id="254801"/>
<dbReference type="Pumba" id="Q8VC04"/>
<dbReference type="Antibodypedia" id="61733">
    <property type="antibodies" value="57 antibodies from 18 providers"/>
</dbReference>
<dbReference type="DNASU" id="217203"/>
<dbReference type="Ensembl" id="ENSMUST00000039581.14">
    <property type="protein sequence ID" value="ENSMUSP00000045832.8"/>
    <property type="gene ID" value="ENSMUSG00000034947.14"/>
</dbReference>
<dbReference type="Ensembl" id="ENSMUST00000100403.9">
    <property type="protein sequence ID" value="ENSMUSP00000097971.3"/>
    <property type="gene ID" value="ENSMUSG00000034947.14"/>
</dbReference>
<dbReference type="GeneID" id="217203"/>
<dbReference type="KEGG" id="mmu:217203"/>
<dbReference type="UCSC" id="uc007lpl.1">
    <property type="organism name" value="mouse"/>
</dbReference>
<dbReference type="AGR" id="MGI:1922056"/>
<dbReference type="CTD" id="113277"/>
<dbReference type="MGI" id="MGI:1922056">
    <property type="gene designation" value="Tmem106a"/>
</dbReference>
<dbReference type="VEuPathDB" id="HostDB:ENSMUSG00000034947"/>
<dbReference type="eggNOG" id="ENOG502RY0I">
    <property type="taxonomic scope" value="Eukaryota"/>
</dbReference>
<dbReference type="GeneTree" id="ENSGT00940000161546"/>
<dbReference type="HOGENOM" id="CLU_089337_1_0_1"/>
<dbReference type="InParanoid" id="Q8VC04"/>
<dbReference type="OMA" id="CSYLCHS"/>
<dbReference type="OrthoDB" id="508875at2759"/>
<dbReference type="PhylomeDB" id="Q8VC04"/>
<dbReference type="TreeFam" id="TF328907"/>
<dbReference type="BioGRID-ORCS" id="217203">
    <property type="hits" value="1 hit in 77 CRISPR screens"/>
</dbReference>
<dbReference type="ChiTaRS" id="Tmem106a">
    <property type="organism name" value="mouse"/>
</dbReference>
<dbReference type="PRO" id="PR:Q8VC04"/>
<dbReference type="Proteomes" id="UP000000589">
    <property type="component" value="Chromosome 11"/>
</dbReference>
<dbReference type="RNAct" id="Q8VC04">
    <property type="molecule type" value="protein"/>
</dbReference>
<dbReference type="Bgee" id="ENSMUSG00000034947">
    <property type="expression patterns" value="Expressed in right kidney and 138 other cell types or tissues"/>
</dbReference>
<dbReference type="ExpressionAtlas" id="Q8VC04">
    <property type="expression patterns" value="baseline and differential"/>
</dbReference>
<dbReference type="GO" id="GO:0005886">
    <property type="term" value="C:plasma membrane"/>
    <property type="evidence" value="ECO:0000314"/>
    <property type="project" value="UniProtKB"/>
</dbReference>
<dbReference type="GO" id="GO:0009101">
    <property type="term" value="P:glycoprotein biosynthetic process"/>
    <property type="evidence" value="ECO:0000314"/>
    <property type="project" value="UniProtKB"/>
</dbReference>
<dbReference type="GO" id="GO:0045087">
    <property type="term" value="P:innate immune response"/>
    <property type="evidence" value="ECO:0007669"/>
    <property type="project" value="UniProtKB-KW"/>
</dbReference>
<dbReference type="GO" id="GO:0042116">
    <property type="term" value="P:macrophage activation"/>
    <property type="evidence" value="ECO:0000314"/>
    <property type="project" value="UniProtKB"/>
</dbReference>
<dbReference type="GO" id="GO:0043123">
    <property type="term" value="P:positive regulation of canonical NF-kappaB signal transduction"/>
    <property type="evidence" value="ECO:0000314"/>
    <property type="project" value="UniProtKB"/>
</dbReference>
<dbReference type="GO" id="GO:0032731">
    <property type="term" value="P:positive regulation of interleukin-1 beta production"/>
    <property type="evidence" value="ECO:0000314"/>
    <property type="project" value="UniProtKB"/>
</dbReference>
<dbReference type="GO" id="GO:0032755">
    <property type="term" value="P:positive regulation of interleukin-6 production"/>
    <property type="evidence" value="ECO:0000314"/>
    <property type="project" value="UniProtKB"/>
</dbReference>
<dbReference type="GO" id="GO:0043410">
    <property type="term" value="P:positive regulation of MAPK cascade"/>
    <property type="evidence" value="ECO:0000314"/>
    <property type="project" value="UniProtKB"/>
</dbReference>
<dbReference type="GO" id="GO:0045348">
    <property type="term" value="P:positive regulation of MHC class II biosynthetic process"/>
    <property type="evidence" value="ECO:0000314"/>
    <property type="project" value="UniProtKB"/>
</dbReference>
<dbReference type="GO" id="GO:1904407">
    <property type="term" value="P:positive regulation of nitric oxide metabolic process"/>
    <property type="evidence" value="ECO:0000314"/>
    <property type="project" value="UniProtKB"/>
</dbReference>
<dbReference type="GO" id="GO:0032760">
    <property type="term" value="P:positive regulation of tumor necrosis factor production"/>
    <property type="evidence" value="ECO:0000314"/>
    <property type="project" value="UniProtKB"/>
</dbReference>
<dbReference type="InterPro" id="IPR009790">
    <property type="entry name" value="TMEM106"/>
</dbReference>
<dbReference type="InterPro" id="IPR048509">
    <property type="entry name" value="TMEM106_C"/>
</dbReference>
<dbReference type="InterPro" id="IPR048511">
    <property type="entry name" value="TMEM106_N"/>
</dbReference>
<dbReference type="PANTHER" id="PTHR28556:SF3">
    <property type="entry name" value="TRANSMEMBRANE PROTEIN 106A"/>
    <property type="match status" value="1"/>
</dbReference>
<dbReference type="PANTHER" id="PTHR28556">
    <property type="entry name" value="TRANSMEMBRANE PROTEIN 106B"/>
    <property type="match status" value="1"/>
</dbReference>
<dbReference type="Pfam" id="PF07092">
    <property type="entry name" value="TMEM106"/>
    <property type="match status" value="1"/>
</dbReference>
<dbReference type="Pfam" id="PF21002">
    <property type="entry name" value="TMEM106_N"/>
    <property type="match status" value="1"/>
</dbReference>
<feature type="chain" id="PRO_0000242138" description="Transmembrane protein 106A">
    <location>
        <begin position="1"/>
        <end position="261"/>
    </location>
</feature>
<feature type="transmembrane region" description="Helical" evidence="2">
    <location>
        <begin position="93"/>
        <end position="113"/>
    </location>
</feature>
<feature type="region of interest" description="Disordered" evidence="3">
    <location>
        <begin position="1"/>
        <end position="23"/>
    </location>
</feature>
<feature type="sequence conflict" description="In Ref. 2; AAH33268." evidence="5" ref="2">
    <original>S</original>
    <variation>F</variation>
    <location>
        <position position="43"/>
    </location>
</feature>
<feature type="sequence conflict" description="In Ref. 1; BAE32441." evidence="5" ref="1">
    <original>L</original>
    <variation>M</variation>
    <location>
        <position position="75"/>
    </location>
</feature>
<feature type="sequence conflict" description="In Ref. 2; AAH33268." evidence="5" ref="2">
    <original>T</original>
    <variation>M</variation>
    <location>
        <position position="141"/>
    </location>
</feature>
<feature type="sequence conflict" description="In Ref. 1; BAE29006." evidence="5" ref="1">
    <original>R</original>
    <variation>T</variation>
    <location>
        <position position="247"/>
    </location>
</feature>
<feature type="sequence conflict" description="In Ref. 1; BAE29006." evidence="5" ref="1">
    <original>H</original>
    <variation>Q</variation>
    <location>
        <position position="254"/>
    </location>
</feature>
<feature type="sequence conflict" description="In Ref. 1; BAE29006." evidence="5" ref="1">
    <original>L</original>
    <variation>V</variation>
    <location>
        <position position="257"/>
    </location>
</feature>
<protein>
    <recommendedName>
        <fullName>Transmembrane protein 106A</fullName>
    </recommendedName>
</protein>
<reference key="1">
    <citation type="journal article" date="2005" name="Science">
        <title>The transcriptional landscape of the mammalian genome.</title>
        <authorList>
            <person name="Carninci P."/>
            <person name="Kasukawa T."/>
            <person name="Katayama S."/>
            <person name="Gough J."/>
            <person name="Frith M.C."/>
            <person name="Maeda N."/>
            <person name="Oyama R."/>
            <person name="Ravasi T."/>
            <person name="Lenhard B."/>
            <person name="Wells C."/>
            <person name="Kodzius R."/>
            <person name="Shimokawa K."/>
            <person name="Bajic V.B."/>
            <person name="Brenner S.E."/>
            <person name="Batalov S."/>
            <person name="Forrest A.R."/>
            <person name="Zavolan M."/>
            <person name="Davis M.J."/>
            <person name="Wilming L.G."/>
            <person name="Aidinis V."/>
            <person name="Allen J.E."/>
            <person name="Ambesi-Impiombato A."/>
            <person name="Apweiler R."/>
            <person name="Aturaliya R.N."/>
            <person name="Bailey T.L."/>
            <person name="Bansal M."/>
            <person name="Baxter L."/>
            <person name="Beisel K.W."/>
            <person name="Bersano T."/>
            <person name="Bono H."/>
            <person name="Chalk A.M."/>
            <person name="Chiu K.P."/>
            <person name="Choudhary V."/>
            <person name="Christoffels A."/>
            <person name="Clutterbuck D.R."/>
            <person name="Crowe M.L."/>
            <person name="Dalla E."/>
            <person name="Dalrymple B.P."/>
            <person name="de Bono B."/>
            <person name="Della Gatta G."/>
            <person name="di Bernardo D."/>
            <person name="Down T."/>
            <person name="Engstrom P."/>
            <person name="Fagiolini M."/>
            <person name="Faulkner G."/>
            <person name="Fletcher C.F."/>
            <person name="Fukushima T."/>
            <person name="Furuno M."/>
            <person name="Futaki S."/>
            <person name="Gariboldi M."/>
            <person name="Georgii-Hemming P."/>
            <person name="Gingeras T.R."/>
            <person name="Gojobori T."/>
            <person name="Green R.E."/>
            <person name="Gustincich S."/>
            <person name="Harbers M."/>
            <person name="Hayashi Y."/>
            <person name="Hensch T.K."/>
            <person name="Hirokawa N."/>
            <person name="Hill D."/>
            <person name="Huminiecki L."/>
            <person name="Iacono M."/>
            <person name="Ikeo K."/>
            <person name="Iwama A."/>
            <person name="Ishikawa T."/>
            <person name="Jakt M."/>
            <person name="Kanapin A."/>
            <person name="Katoh M."/>
            <person name="Kawasawa Y."/>
            <person name="Kelso J."/>
            <person name="Kitamura H."/>
            <person name="Kitano H."/>
            <person name="Kollias G."/>
            <person name="Krishnan S.P."/>
            <person name="Kruger A."/>
            <person name="Kummerfeld S.K."/>
            <person name="Kurochkin I.V."/>
            <person name="Lareau L.F."/>
            <person name="Lazarevic D."/>
            <person name="Lipovich L."/>
            <person name="Liu J."/>
            <person name="Liuni S."/>
            <person name="McWilliam S."/>
            <person name="Madan Babu M."/>
            <person name="Madera M."/>
            <person name="Marchionni L."/>
            <person name="Matsuda H."/>
            <person name="Matsuzawa S."/>
            <person name="Miki H."/>
            <person name="Mignone F."/>
            <person name="Miyake S."/>
            <person name="Morris K."/>
            <person name="Mottagui-Tabar S."/>
            <person name="Mulder N."/>
            <person name="Nakano N."/>
            <person name="Nakauchi H."/>
            <person name="Ng P."/>
            <person name="Nilsson R."/>
            <person name="Nishiguchi S."/>
            <person name="Nishikawa S."/>
            <person name="Nori F."/>
            <person name="Ohara O."/>
            <person name="Okazaki Y."/>
            <person name="Orlando V."/>
            <person name="Pang K.C."/>
            <person name="Pavan W.J."/>
            <person name="Pavesi G."/>
            <person name="Pesole G."/>
            <person name="Petrovsky N."/>
            <person name="Piazza S."/>
            <person name="Reed J."/>
            <person name="Reid J.F."/>
            <person name="Ring B.Z."/>
            <person name="Ringwald M."/>
            <person name="Rost B."/>
            <person name="Ruan Y."/>
            <person name="Salzberg S.L."/>
            <person name="Sandelin A."/>
            <person name="Schneider C."/>
            <person name="Schoenbach C."/>
            <person name="Sekiguchi K."/>
            <person name="Semple C.A."/>
            <person name="Seno S."/>
            <person name="Sessa L."/>
            <person name="Sheng Y."/>
            <person name="Shibata Y."/>
            <person name="Shimada H."/>
            <person name="Shimada K."/>
            <person name="Silva D."/>
            <person name="Sinclair B."/>
            <person name="Sperling S."/>
            <person name="Stupka E."/>
            <person name="Sugiura K."/>
            <person name="Sultana R."/>
            <person name="Takenaka Y."/>
            <person name="Taki K."/>
            <person name="Tammoja K."/>
            <person name="Tan S.L."/>
            <person name="Tang S."/>
            <person name="Taylor M.S."/>
            <person name="Tegner J."/>
            <person name="Teichmann S.A."/>
            <person name="Ueda H.R."/>
            <person name="van Nimwegen E."/>
            <person name="Verardo R."/>
            <person name="Wei C.L."/>
            <person name="Yagi K."/>
            <person name="Yamanishi H."/>
            <person name="Zabarovsky E."/>
            <person name="Zhu S."/>
            <person name="Zimmer A."/>
            <person name="Hide W."/>
            <person name="Bult C."/>
            <person name="Grimmond S.M."/>
            <person name="Teasdale R.D."/>
            <person name="Liu E.T."/>
            <person name="Brusic V."/>
            <person name="Quackenbush J."/>
            <person name="Wahlestedt C."/>
            <person name="Mattick J.S."/>
            <person name="Hume D.A."/>
            <person name="Kai C."/>
            <person name="Sasaki D."/>
            <person name="Tomaru Y."/>
            <person name="Fukuda S."/>
            <person name="Kanamori-Katayama M."/>
            <person name="Suzuki M."/>
            <person name="Aoki J."/>
            <person name="Arakawa T."/>
            <person name="Iida J."/>
            <person name="Imamura K."/>
            <person name="Itoh M."/>
            <person name="Kato T."/>
            <person name="Kawaji H."/>
            <person name="Kawagashira N."/>
            <person name="Kawashima T."/>
            <person name="Kojima M."/>
            <person name="Kondo S."/>
            <person name="Konno H."/>
            <person name="Nakano K."/>
            <person name="Ninomiya N."/>
            <person name="Nishio T."/>
            <person name="Okada M."/>
            <person name="Plessy C."/>
            <person name="Shibata K."/>
            <person name="Shiraki T."/>
            <person name="Suzuki S."/>
            <person name="Tagami M."/>
            <person name="Waki K."/>
            <person name="Watahiki A."/>
            <person name="Okamura-Oho Y."/>
            <person name="Suzuki H."/>
            <person name="Kawai J."/>
            <person name="Hayashizaki Y."/>
        </authorList>
    </citation>
    <scope>NUCLEOTIDE SEQUENCE [LARGE SCALE MRNA]</scope>
    <source>
        <strain>C57BL/6J</strain>
        <strain>NOD</strain>
        <tissue>Amnion</tissue>
        <tissue>Bone marrow</tissue>
        <tissue>Placenta</tissue>
        <tissue>Spleen</tissue>
    </source>
</reference>
<reference key="2">
    <citation type="journal article" date="2004" name="Genome Res.">
        <title>The status, quality, and expansion of the NIH full-length cDNA project: the Mammalian Gene Collection (MGC).</title>
        <authorList>
            <consortium name="The MGC Project Team"/>
        </authorList>
    </citation>
    <scope>NUCLEOTIDE SEQUENCE [LARGE SCALE MRNA]</scope>
    <source>
        <strain>Czech II</strain>
        <strain>FVB/N</strain>
        <tissue>Liver</tissue>
        <tissue>Mammary tumor</tissue>
    </source>
</reference>
<reference key="3">
    <citation type="journal article" date="2015" name="Sci. Rep.">
        <title>Transmembrane protein 106a activates mouse peritoneal macrophages via the MAPK and NF-kappaB signaling pathways.</title>
        <authorList>
            <person name="Dai H."/>
            <person name="Xu D."/>
            <person name="Su J."/>
            <person name="Jang J."/>
            <person name="Chen Y."/>
        </authorList>
    </citation>
    <scope>FUNCTION</scope>
    <scope>SUBCELLULAR LOCATION</scope>
    <scope>TISSUE SPECIFICITY</scope>
    <scope>INDUCTION BY THIOGLYCOLLATE</scope>
</reference>
<organism>
    <name type="scientific">Mus musculus</name>
    <name type="common">Mouse</name>
    <dbReference type="NCBI Taxonomy" id="10090"/>
    <lineage>
        <taxon>Eukaryota</taxon>
        <taxon>Metazoa</taxon>
        <taxon>Chordata</taxon>
        <taxon>Craniata</taxon>
        <taxon>Vertebrata</taxon>
        <taxon>Euteleostomi</taxon>
        <taxon>Mammalia</taxon>
        <taxon>Eutheria</taxon>
        <taxon>Euarchontoglires</taxon>
        <taxon>Glires</taxon>
        <taxon>Rodentia</taxon>
        <taxon>Myomorpha</taxon>
        <taxon>Muroidea</taxon>
        <taxon>Muridae</taxon>
        <taxon>Murinae</taxon>
        <taxon>Mus</taxon>
        <taxon>Mus</taxon>
    </lineage>
</organism>
<proteinExistence type="evidence at protein level"/>
<comment type="function">
    <text evidence="1 4">Activates macrophages and polarizes them into M1-like macrophages through the activation of the MAPK and NF-kappaB signaling pathway (PubMed:26215746). Upon activation, up-regulates the expression of CD80, CD86, CD69 and MHC II on macrophages, and induces the release of pro-inflammatory cytokines such as TNF, IL1B, IL6, CCL2 and nitric oxide (PubMed:26215746). May play a role in inhibition of proliferation and migration (By similarity).</text>
</comment>
<comment type="subcellular location">
    <subcellularLocation>
        <location evidence="4">Cell membrane</location>
        <topology evidence="2">Single-pass membrane protein</topology>
    </subcellularLocation>
</comment>
<comment type="tissue specificity">
    <text evidence="4">Expressed in liver, spleen, lung, kidney, lymph nodes and adipose tissue (at protein level) (PubMed:26215746). Expressed by macrophages (PubMed:26215746).</text>
</comment>
<comment type="induction">
    <text evidence="4">Cell surface expression is increased by Thioglycollate in elicited macrophages.</text>
</comment>
<comment type="similarity">
    <text evidence="5">Belongs to the TMEM106 family.</text>
</comment>
<comment type="sequence caution" evidence="5">
    <conflict type="frameshift">
        <sequence resource="EMBL-CDS" id="BAE29006"/>
    </conflict>
</comment>
<comment type="sequence caution" evidence="5">
    <conflict type="frameshift">
        <sequence resource="EMBL-CDS" id="BAE30734"/>
    </conflict>
</comment>